<organism>
    <name type="scientific">Mycobacterium bovis (strain BCG / Pasteur 1173P2)</name>
    <dbReference type="NCBI Taxonomy" id="410289"/>
    <lineage>
        <taxon>Bacteria</taxon>
        <taxon>Bacillati</taxon>
        <taxon>Actinomycetota</taxon>
        <taxon>Actinomycetes</taxon>
        <taxon>Mycobacteriales</taxon>
        <taxon>Mycobacteriaceae</taxon>
        <taxon>Mycobacterium</taxon>
        <taxon>Mycobacterium tuberculosis complex</taxon>
    </lineage>
</organism>
<protein>
    <recommendedName>
        <fullName>Putative S-adenosyl-L-methionine-dependent methyltransferase BCG_0321</fullName>
        <ecNumber>2.1.1.-</ecNumber>
    </recommendedName>
</protein>
<gene>
    <name type="ordered locus">BCG_0321</name>
</gene>
<dbReference type="EC" id="2.1.1.-"/>
<dbReference type="EMBL" id="AM408590">
    <property type="protein sequence ID" value="CAL70306.1"/>
    <property type="molecule type" value="Genomic_DNA"/>
</dbReference>
<dbReference type="RefSeq" id="WP_003401448.1">
    <property type="nucleotide sequence ID" value="NC_008769.1"/>
</dbReference>
<dbReference type="SMR" id="A1KFA4"/>
<dbReference type="KEGG" id="mbb:BCG_0321"/>
<dbReference type="HOGENOM" id="CLU_056160_2_1_11"/>
<dbReference type="Proteomes" id="UP000001472">
    <property type="component" value="Chromosome"/>
</dbReference>
<dbReference type="GO" id="GO:0008168">
    <property type="term" value="F:methyltransferase activity"/>
    <property type="evidence" value="ECO:0007669"/>
    <property type="project" value="UniProtKB-KW"/>
</dbReference>
<dbReference type="GO" id="GO:0032259">
    <property type="term" value="P:methylation"/>
    <property type="evidence" value="ECO:0007669"/>
    <property type="project" value="UniProtKB-KW"/>
</dbReference>
<dbReference type="FunFam" id="3.40.50.150:FF:000152">
    <property type="entry name" value="S-adenosyl-L-methionine-dependent methyltransferase"/>
    <property type="match status" value="1"/>
</dbReference>
<dbReference type="Gene3D" id="3.40.50.150">
    <property type="entry name" value="Vaccinia Virus protein VP39"/>
    <property type="match status" value="1"/>
</dbReference>
<dbReference type="InterPro" id="IPR007213">
    <property type="entry name" value="Ppm1/Ppm2/Tcmp"/>
</dbReference>
<dbReference type="InterPro" id="IPR029063">
    <property type="entry name" value="SAM-dependent_MTases_sf"/>
</dbReference>
<dbReference type="InterPro" id="IPR011610">
    <property type="entry name" value="SAM_mthyl_Trfase_ML2640-like"/>
</dbReference>
<dbReference type="NCBIfam" id="TIGR00027">
    <property type="entry name" value="mthyl_TIGR00027"/>
    <property type="match status" value="1"/>
</dbReference>
<dbReference type="PANTHER" id="PTHR43619">
    <property type="entry name" value="S-ADENOSYL-L-METHIONINE-DEPENDENT METHYLTRANSFERASE YKTD-RELATED"/>
    <property type="match status" value="1"/>
</dbReference>
<dbReference type="PANTHER" id="PTHR43619:SF2">
    <property type="entry name" value="S-ADENOSYL-L-METHIONINE-DEPENDENT METHYLTRANSFERASES SUPERFAMILY PROTEIN"/>
    <property type="match status" value="1"/>
</dbReference>
<dbReference type="Pfam" id="PF04072">
    <property type="entry name" value="LCM"/>
    <property type="match status" value="1"/>
</dbReference>
<dbReference type="SUPFAM" id="SSF53335">
    <property type="entry name" value="S-adenosyl-L-methionine-dependent methyltransferases"/>
    <property type="match status" value="1"/>
</dbReference>
<reference key="1">
    <citation type="journal article" date="2007" name="Proc. Natl. Acad. Sci. U.S.A.">
        <title>Genome plasticity of BCG and impact on vaccine efficacy.</title>
        <authorList>
            <person name="Brosch R."/>
            <person name="Gordon S.V."/>
            <person name="Garnier T."/>
            <person name="Eiglmeier K."/>
            <person name="Frigui W."/>
            <person name="Valenti P."/>
            <person name="Dos Santos S."/>
            <person name="Duthoy S."/>
            <person name="Lacroix C."/>
            <person name="Garcia-Pelayo C."/>
            <person name="Inwald J.K."/>
            <person name="Golby P."/>
            <person name="Garcia J.N."/>
            <person name="Hewinson R.G."/>
            <person name="Behr M.A."/>
            <person name="Quail M.A."/>
            <person name="Churcher C."/>
            <person name="Barrell B.G."/>
            <person name="Parkhill J."/>
            <person name="Cole S.T."/>
        </authorList>
    </citation>
    <scope>NUCLEOTIDE SEQUENCE [LARGE SCALE GENOMIC DNA]</scope>
    <source>
        <strain>BCG / Pasteur 1173P2</strain>
    </source>
</reference>
<proteinExistence type="inferred from homology"/>
<evidence type="ECO:0000250" key="1"/>
<evidence type="ECO:0000305" key="2"/>
<name>Y321_MYCBP</name>
<keyword id="KW-0489">Methyltransferase</keyword>
<keyword id="KW-0949">S-adenosyl-L-methionine</keyword>
<keyword id="KW-0808">Transferase</keyword>
<feature type="chain" id="PRO_0000361145" description="Putative S-adenosyl-L-methionine-dependent methyltransferase BCG_0321">
    <location>
        <begin position="1"/>
        <end position="302"/>
    </location>
</feature>
<feature type="binding site" evidence="1">
    <location>
        <position position="126"/>
    </location>
    <ligand>
        <name>S-adenosyl-L-methionine</name>
        <dbReference type="ChEBI" id="CHEBI:59789"/>
    </ligand>
</feature>
<feature type="binding site" evidence="1">
    <location>
        <begin position="155"/>
        <end position="156"/>
    </location>
    <ligand>
        <name>S-adenosyl-L-methionine</name>
        <dbReference type="ChEBI" id="CHEBI:59789"/>
    </ligand>
</feature>
<sequence>MRTEGDSWDITTSVGSTALFVATARALEAQKSDPLVVDPYAEAFCRAVGGSWADVLDGKLPDHKLKSTDFGEHFVNFQGARTKYFDEYFRRAAAAGARQVVILAAGLDSRAYRLPWPDGTTVFELDRPQVLDFKREVLASHGAQPRALRREIAVDLRDDWPQALRDSGFDAAAPSAWIAEGLLIYLPATAQERLFTGIDALAGRRSHVAVEDGAPMGPDEYAAKVEEERAAIAEGAEEHPFFQLVYNERCAPAAEWFGERGWTAVATLLNDYLEAVGRPVPGPESEAGPMFARNTLVSAARV</sequence>
<comment type="function">
    <text evidence="1">Exhibits S-adenosyl-L-methionine-dependent methyltransferase activity.</text>
</comment>
<comment type="similarity">
    <text evidence="2">Belongs to the UPF0677 family.</text>
</comment>
<accession>A1KFA4</accession>